<organism>
    <name type="scientific">Influenza A virus (strain A/New Jersey/8/1976 H1N1)</name>
    <dbReference type="NCBI Taxonomy" id="379756"/>
    <lineage>
        <taxon>Viruses</taxon>
        <taxon>Riboviria</taxon>
        <taxon>Orthornavirae</taxon>
        <taxon>Negarnaviricota</taxon>
        <taxon>Polyploviricotina</taxon>
        <taxon>Insthoviricetes</taxon>
        <taxon>Articulavirales</taxon>
        <taxon>Orthomyxoviridae</taxon>
        <taxon>Alphainfluenzavirus</taxon>
        <taxon>Alphainfluenzavirus influenzae</taxon>
        <taxon>Influenza A virus</taxon>
    </lineage>
</organism>
<dbReference type="EC" id="3.2.1.18" evidence="1"/>
<dbReference type="EMBL" id="D31946">
    <property type="protein sequence ID" value="BAA06716.1"/>
    <property type="molecule type" value="Genomic_RNA"/>
</dbReference>
<dbReference type="SMR" id="Q76WJ1"/>
<dbReference type="GlyCosmos" id="Q76WJ1">
    <property type="glycosylation" value="7 sites, No reported glycans"/>
</dbReference>
<dbReference type="GO" id="GO:0020002">
    <property type="term" value="C:host cell plasma membrane"/>
    <property type="evidence" value="ECO:0007669"/>
    <property type="project" value="UniProtKB-SubCell"/>
</dbReference>
<dbReference type="GO" id="GO:0016020">
    <property type="term" value="C:membrane"/>
    <property type="evidence" value="ECO:0007669"/>
    <property type="project" value="UniProtKB-UniRule"/>
</dbReference>
<dbReference type="GO" id="GO:0055036">
    <property type="term" value="C:virion membrane"/>
    <property type="evidence" value="ECO:0007669"/>
    <property type="project" value="UniProtKB-SubCell"/>
</dbReference>
<dbReference type="GO" id="GO:0004308">
    <property type="term" value="F:exo-alpha-sialidase activity"/>
    <property type="evidence" value="ECO:0007669"/>
    <property type="project" value="UniProtKB-UniRule"/>
</dbReference>
<dbReference type="GO" id="GO:0046872">
    <property type="term" value="F:metal ion binding"/>
    <property type="evidence" value="ECO:0007669"/>
    <property type="project" value="UniProtKB-UniRule"/>
</dbReference>
<dbReference type="GO" id="GO:0005975">
    <property type="term" value="P:carbohydrate metabolic process"/>
    <property type="evidence" value="ECO:0007669"/>
    <property type="project" value="InterPro"/>
</dbReference>
<dbReference type="GO" id="GO:0046761">
    <property type="term" value="P:viral budding from plasma membrane"/>
    <property type="evidence" value="ECO:0007669"/>
    <property type="project" value="UniProtKB-UniRule"/>
</dbReference>
<dbReference type="CDD" id="cd15483">
    <property type="entry name" value="Influenza_NA"/>
    <property type="match status" value="1"/>
</dbReference>
<dbReference type="FunFam" id="2.120.10.10:FF:000001">
    <property type="entry name" value="Neuraminidase"/>
    <property type="match status" value="1"/>
</dbReference>
<dbReference type="Gene3D" id="2.120.10.10">
    <property type="match status" value="1"/>
</dbReference>
<dbReference type="HAMAP" id="MF_04071">
    <property type="entry name" value="INFV_NRAM"/>
    <property type="match status" value="1"/>
</dbReference>
<dbReference type="InterPro" id="IPR001860">
    <property type="entry name" value="Glyco_hydro_34"/>
</dbReference>
<dbReference type="InterPro" id="IPR033654">
    <property type="entry name" value="Sialidase_Influenza_A/B"/>
</dbReference>
<dbReference type="InterPro" id="IPR036278">
    <property type="entry name" value="Sialidase_sf"/>
</dbReference>
<dbReference type="Pfam" id="PF00064">
    <property type="entry name" value="Neur"/>
    <property type="match status" value="1"/>
</dbReference>
<dbReference type="SUPFAM" id="SSF50939">
    <property type="entry name" value="Sialidases"/>
    <property type="match status" value="1"/>
</dbReference>
<organismHost>
    <name type="scientific">Aves</name>
    <dbReference type="NCBI Taxonomy" id="8782"/>
</organismHost>
<organismHost>
    <name type="scientific">Homo sapiens</name>
    <name type="common">Human</name>
    <dbReference type="NCBI Taxonomy" id="9606"/>
</organismHost>
<organismHost>
    <name type="scientific">Sus scrofa</name>
    <name type="common">Pig</name>
    <dbReference type="NCBI Taxonomy" id="9823"/>
</organismHost>
<keyword id="KW-0106">Calcium</keyword>
<keyword id="KW-1015">Disulfide bond</keyword>
<keyword id="KW-0325">Glycoprotein</keyword>
<keyword id="KW-0326">Glycosidase</keyword>
<keyword id="KW-1032">Host cell membrane</keyword>
<keyword id="KW-1043">Host membrane</keyword>
<keyword id="KW-0378">Hydrolase</keyword>
<keyword id="KW-0472">Membrane</keyword>
<keyword id="KW-0479">Metal-binding</keyword>
<keyword id="KW-0735">Signal-anchor</keyword>
<keyword id="KW-0812">Transmembrane</keyword>
<keyword id="KW-1133">Transmembrane helix</keyword>
<keyword id="KW-0946">Virion</keyword>
<sequence length="469" mass="51661">MNTNQRIITIGTICLIVGIISLLLQIGNIILLWMSHSIQTGEKSHPKVCNQSVITYENNTWVNQTYVNISNTNIAAGQGVTPIILAGNSSLCPISGWAIYSKDNSIRIGSKGDIFVMREPFISCSHLECRTFFLTQGALLNDRHSNGTVKDRSPYRTLMSCPIGEAPSPYNSRFESVAWSASACHDGMGWLTIGISGPDNGAVAVLKYNGIITDTIKSWRNKILRTQESECVCINGSCFTIMTDGPSNGQASYKLFKMEKGKIIKSIELDAPNYHYEECSCYPDTGKVVCVCRDNWHASNRPWVSFDQNLDYQIGYICSGVFGDNPRSNDGKGNCGPVLSNGANGVKGFSFRYGNGVWIGRTKSISSRRGFEMIWDPNGWTETDSSFSMKQDIIALTDWSGYSGSFVQHPELTGMNCIRPCFWVELIRGQPKESTIWTSGSSISFCGVNSGTASWSWPDGADLPFTIDK</sequence>
<evidence type="ECO:0000255" key="1">
    <source>
        <dbReference type="HAMAP-Rule" id="MF_04071"/>
    </source>
</evidence>
<comment type="function">
    <text evidence="1">Catalyzes the removal of terminal sialic acid residues from viral and cellular glycoconjugates. Cleaves off the terminal sialic acids on the glycosylated HA during virus budding to facilitate virus release. Additionally helps virus spread through the circulation by further removing sialic acids from the cell surface. These cleavages prevent self-aggregation and ensure the efficient spread of the progeny virus from cell to cell. Otherwise, infection would be limited to one round of replication. Described as a receptor-destroying enzyme because it cleaves a terminal sialic acid from the cellular receptors. May facilitate viral invasion of the upper airways by cleaving the sialic acid moieties on the mucin of the airway epithelial cells. Likely to plays a role in the budding process through its association with lipid rafts during intracellular transport. May additionally display a raft-association independent effect on budding. Plays a role in the determination of host range restriction on replication and virulence. Sialidase activity in late endosome/lysosome traffic seems to enhance virus replication.</text>
</comment>
<comment type="catalytic activity">
    <reaction evidence="1">
        <text>Hydrolysis of alpha-(2-&gt;3)-, alpha-(2-&gt;6)-, alpha-(2-&gt;8)- glycosidic linkages of terminal sialic acid residues in oligosaccharides, glycoproteins, glycolipids, colominic acid and synthetic substrates.</text>
        <dbReference type="EC" id="3.2.1.18"/>
    </reaction>
</comment>
<comment type="cofactor">
    <cofactor evidence="1">
        <name>Ca(2+)</name>
        <dbReference type="ChEBI" id="CHEBI:29108"/>
    </cofactor>
</comment>
<comment type="activity regulation">
    <text evidence="1">Inhibited by the neuraminidase inhibitors zanamivir (Relenza) and oseltamivir (Tamiflu). These drugs interfere with the release of progeny virus from infected cells and are effective against all influenza strains. Resistance to neuraminidase inhibitors is quite rare.</text>
</comment>
<comment type="subunit">
    <text evidence="1">Homotetramer.</text>
</comment>
<comment type="subcellular location">
    <subcellularLocation>
        <location evidence="1">Virion membrane</location>
    </subcellularLocation>
    <subcellularLocation>
        <location evidence="1">Host apical cell membrane</location>
        <topology evidence="1">Single-pass type II membrane protein</topology>
    </subcellularLocation>
    <text evidence="1">Preferentially accumulates at the apical plasma membrane in infected polarized epithelial cells, which is the virus assembly site. Uses lipid rafts for cell surface transport and apical sorting. In the virion, forms a mushroom-shaped spike on the surface of the membrane.</text>
</comment>
<comment type="domain">
    <text evidence="1">Intact N-terminus is essential for virion morphogenesis. Possesses two apical sorting signals, one in the ectodomain, which is likely to be a glycan, and the other in the transmembrane domain. The transmembrane domain also plays a role in lipid raft association.</text>
</comment>
<comment type="PTM">
    <text evidence="1">N-glycosylated.</text>
</comment>
<comment type="miscellaneous">
    <text>The influenza A genome consist of 8 RNA segments. Genetic variation of hemagglutinin and/or neuraminidase genes results in the emergence of new influenza strains. The mechanism of variation can be the result of point mutations or the result of genetic reassortment between segments of two different strains.</text>
</comment>
<comment type="similarity">
    <text evidence="1">Belongs to the glycosyl hydrolase 34 family.</text>
</comment>
<accession>Q76WJ1</accession>
<gene>
    <name evidence="1" type="primary">NA</name>
</gene>
<proteinExistence type="inferred from homology"/>
<reference key="1">
    <citation type="journal article" date="1995" name="J. Gen. Virol.">
        <title>Antigenic and genetic characteristics of H1N1 human influenza virus isolated from pigs in Japan.</title>
        <authorList>
            <person name="Katsuda K."/>
            <person name="Sato S."/>
            <person name="Shirahata T."/>
            <person name="Lindstrom S."/>
            <person name="Nerome R."/>
            <person name="Ishida M."/>
            <person name="Nerome K."/>
            <person name="Goto H."/>
        </authorList>
    </citation>
    <scope>NUCLEOTIDE SEQUENCE [GENOMIC RNA]</scope>
</reference>
<reference key="2">
    <citation type="journal article" date="2004" name="Virus Res.">
        <title>Assembly and budding of influenza virus.</title>
        <authorList>
            <person name="Nayak D.P."/>
            <person name="Hui E.K."/>
            <person name="Barman S."/>
        </authorList>
    </citation>
    <scope>REVIEW</scope>
</reference>
<reference key="3">
    <citation type="journal article" date="2005" name="N. Engl. J. Med.">
        <title>Neuraminidase inhibitors for influenza.</title>
        <authorList>
            <person name="Moscona A."/>
        </authorList>
    </citation>
    <scope>REVIEW</scope>
</reference>
<reference key="4">
    <citation type="journal article" date="2005" name="Biol. Pharm. Bull.">
        <title>Sialobiology of influenza: molecular mechanism of host range variation of influenza viruses.</title>
        <authorList>
            <person name="Suzuki Y."/>
        </authorList>
    </citation>
    <scope>REVIEW</scope>
</reference>
<name>NRAM_I76A7</name>
<protein>
    <recommendedName>
        <fullName evidence="1">Neuraminidase</fullName>
        <ecNumber evidence="1">3.2.1.18</ecNumber>
    </recommendedName>
</protein>
<feature type="chain" id="PRO_0000280146" description="Neuraminidase">
    <location>
        <begin position="1"/>
        <end position="469"/>
    </location>
</feature>
<feature type="topological domain" description="Intravirion" evidence="1">
    <location>
        <begin position="1"/>
        <end position="12"/>
    </location>
</feature>
<feature type="transmembrane region" description="Helical" evidence="1">
    <location>
        <begin position="13"/>
        <end position="33"/>
    </location>
</feature>
<feature type="topological domain" description="Virion surface" evidence="1">
    <location>
        <begin position="34"/>
        <end position="469"/>
    </location>
</feature>
<feature type="region of interest" description="Involved in apical transport and lipid raft association" evidence="1">
    <location>
        <begin position="11"/>
        <end position="33"/>
    </location>
</feature>
<feature type="region of interest" description="Hypervariable stalk region" evidence="1">
    <location>
        <begin position="36"/>
        <end position="90"/>
    </location>
</feature>
<feature type="region of interest" description="Head of neuraminidase" evidence="1">
    <location>
        <begin position="91"/>
        <end position="469"/>
    </location>
</feature>
<feature type="active site" description="Proton donor/acceptor" evidence="1">
    <location>
        <position position="151"/>
    </location>
</feature>
<feature type="active site" description="Nucleophile" evidence="1">
    <location>
        <position position="402"/>
    </location>
</feature>
<feature type="binding site" evidence="1">
    <location>
        <position position="118"/>
    </location>
    <ligand>
        <name>substrate</name>
    </ligand>
</feature>
<feature type="binding site" evidence="1">
    <location>
        <position position="152"/>
    </location>
    <ligand>
        <name>substrate</name>
    </ligand>
</feature>
<feature type="binding site" evidence="1">
    <location>
        <begin position="277"/>
        <end position="278"/>
    </location>
    <ligand>
        <name>substrate</name>
    </ligand>
</feature>
<feature type="binding site" evidence="1">
    <location>
        <position position="293"/>
    </location>
    <ligand>
        <name>substrate</name>
    </ligand>
</feature>
<feature type="binding site" evidence="1">
    <location>
        <position position="294"/>
    </location>
    <ligand>
        <name>Ca(2+)</name>
        <dbReference type="ChEBI" id="CHEBI:29108"/>
    </ligand>
</feature>
<feature type="binding site" evidence="1">
    <location>
        <position position="324"/>
    </location>
    <ligand>
        <name>Ca(2+)</name>
        <dbReference type="ChEBI" id="CHEBI:29108"/>
    </ligand>
</feature>
<feature type="binding site" evidence="1">
    <location>
        <position position="344"/>
    </location>
    <ligand>
        <name>Ca(2+)</name>
        <dbReference type="ChEBI" id="CHEBI:29108"/>
    </ligand>
</feature>
<feature type="binding site" evidence="1">
    <location>
        <position position="368"/>
    </location>
    <ligand>
        <name>substrate</name>
    </ligand>
</feature>
<feature type="glycosylation site" description="N-linked (GlcNAc...) asparagine; by host" evidence="1">
    <location>
        <position position="50"/>
    </location>
</feature>
<feature type="glycosylation site" description="N-linked (GlcNAc...) asparagine; by host" evidence="1">
    <location>
        <position position="58"/>
    </location>
</feature>
<feature type="glycosylation site" description="N-linked (GlcNAc...) asparagine; by host" evidence="1">
    <location>
        <position position="63"/>
    </location>
</feature>
<feature type="glycosylation site" description="N-linked (GlcNAc...) asparagine; by host" evidence="1">
    <location>
        <position position="68"/>
    </location>
</feature>
<feature type="glycosylation site" description="N-linked (GlcNAc...) asparagine; by host" evidence="1">
    <location>
        <position position="88"/>
    </location>
</feature>
<feature type="glycosylation site" description="N-linked (GlcNAc...) asparagine; by host" evidence="1">
    <location>
        <position position="146"/>
    </location>
</feature>
<feature type="glycosylation site" description="N-linked (GlcNAc...) asparagine; by host" evidence="1">
    <location>
        <position position="235"/>
    </location>
</feature>
<feature type="disulfide bond" evidence="1">
    <location>
        <begin position="92"/>
        <end position="417"/>
    </location>
</feature>
<feature type="disulfide bond" evidence="1">
    <location>
        <begin position="124"/>
        <end position="129"/>
    </location>
</feature>
<feature type="disulfide bond" evidence="1">
    <location>
        <begin position="184"/>
        <end position="231"/>
    </location>
</feature>
<feature type="disulfide bond" evidence="1">
    <location>
        <begin position="233"/>
        <end position="238"/>
    </location>
</feature>
<feature type="disulfide bond" evidence="1">
    <location>
        <begin position="279"/>
        <end position="292"/>
    </location>
</feature>
<feature type="disulfide bond" evidence="1">
    <location>
        <begin position="281"/>
        <end position="290"/>
    </location>
</feature>
<feature type="disulfide bond" evidence="1">
    <location>
        <begin position="318"/>
        <end position="335"/>
    </location>
</feature>
<feature type="disulfide bond" evidence="1">
    <location>
        <begin position="421"/>
        <end position="446"/>
    </location>
</feature>